<keyword id="KW-0143">Chaperone</keyword>
<keyword id="KW-0963">Cytoplasm</keyword>
<keyword id="KW-1185">Reference proteome</keyword>
<protein>
    <recommendedName>
        <fullName evidence="2">Probable prefoldin subunit 6</fullName>
    </recommendedName>
</protein>
<sequence>MADMAKFEEEISKLKTLEKDREKYFSSRQEMEMRLTESKNVKAELDLMDSDSKVYKLMGPVLVRQDLEEARSTVEKRLEFIESEIKRVEASITDVNKKSIEQRDKVMNMQKAFQMMATQAQQQAAQKK</sequence>
<feature type="chain" id="PRO_0000365028" description="Probable prefoldin subunit 6">
    <location>
        <begin position="1"/>
        <end position="128"/>
    </location>
</feature>
<evidence type="ECO:0000250" key="1">
    <source>
        <dbReference type="UniProtKB" id="O15212"/>
    </source>
</evidence>
<evidence type="ECO:0000250" key="2">
    <source>
        <dbReference type="UniProtKB" id="P52554"/>
    </source>
</evidence>
<evidence type="ECO:0000255" key="3"/>
<evidence type="ECO:0000312" key="4">
    <source>
        <dbReference type="EMBL" id="CAP38658.1"/>
    </source>
</evidence>
<proteinExistence type="inferred from homology"/>
<accession>A8Y197</accession>
<name>PFD6_CAEBR</name>
<gene>
    <name evidence="4" type="primary">pfd-6</name>
    <name type="ORF">CBG21902</name>
</gene>
<dbReference type="EMBL" id="HE600952">
    <property type="protein sequence ID" value="CAP38658.1"/>
    <property type="molecule type" value="Genomic_DNA"/>
</dbReference>
<dbReference type="SMR" id="A8Y197"/>
<dbReference type="FunCoup" id="A8Y197">
    <property type="interactions" value="2360"/>
</dbReference>
<dbReference type="STRING" id="6238.A8Y197"/>
<dbReference type="EnsemblMetazoa" id="CBG21902.1">
    <property type="protein sequence ID" value="CBG21902.1"/>
    <property type="gene ID" value="WBGene00040573"/>
</dbReference>
<dbReference type="KEGG" id="cbr:CBG_21902"/>
<dbReference type="CTD" id="8573033"/>
<dbReference type="WormBase" id="CBG21902">
    <property type="protein sequence ID" value="CBP20255"/>
    <property type="gene ID" value="WBGene00040573"/>
    <property type="gene designation" value="Cbr-pfd-6"/>
</dbReference>
<dbReference type="eggNOG" id="KOG3478">
    <property type="taxonomic scope" value="Eukaryota"/>
</dbReference>
<dbReference type="HOGENOM" id="CLU_125172_0_1_1"/>
<dbReference type="InParanoid" id="A8Y197"/>
<dbReference type="OMA" id="VQTEFAQ"/>
<dbReference type="OrthoDB" id="248120at2759"/>
<dbReference type="Proteomes" id="UP000008549">
    <property type="component" value="Unassembled WGS sequence"/>
</dbReference>
<dbReference type="GO" id="GO:0005737">
    <property type="term" value="C:cytoplasm"/>
    <property type="evidence" value="ECO:0000318"/>
    <property type="project" value="GO_Central"/>
</dbReference>
<dbReference type="GO" id="GO:0016272">
    <property type="term" value="C:prefoldin complex"/>
    <property type="evidence" value="ECO:0000318"/>
    <property type="project" value="GO_Central"/>
</dbReference>
<dbReference type="GO" id="GO:0051087">
    <property type="term" value="F:protein-folding chaperone binding"/>
    <property type="evidence" value="ECO:0000318"/>
    <property type="project" value="GO_Central"/>
</dbReference>
<dbReference type="GO" id="GO:0051082">
    <property type="term" value="F:unfolded protein binding"/>
    <property type="evidence" value="ECO:0007669"/>
    <property type="project" value="InterPro"/>
</dbReference>
<dbReference type="GO" id="GO:0051131">
    <property type="term" value="P:chaperone-mediated protein complex assembly"/>
    <property type="evidence" value="ECO:0000318"/>
    <property type="project" value="GO_Central"/>
</dbReference>
<dbReference type="GO" id="GO:0006457">
    <property type="term" value="P:protein folding"/>
    <property type="evidence" value="ECO:0000318"/>
    <property type="project" value="GO_Central"/>
</dbReference>
<dbReference type="CDD" id="cd23161">
    <property type="entry name" value="Prefoldin_6"/>
    <property type="match status" value="1"/>
</dbReference>
<dbReference type="FunFam" id="1.10.287.370:FF:000003">
    <property type="entry name" value="Prefoldin subunit 6"/>
    <property type="match status" value="1"/>
</dbReference>
<dbReference type="Gene3D" id="1.10.287.370">
    <property type="match status" value="1"/>
</dbReference>
<dbReference type="InterPro" id="IPR002777">
    <property type="entry name" value="PFD_beta-like"/>
</dbReference>
<dbReference type="InterPro" id="IPR009053">
    <property type="entry name" value="Prefoldin"/>
</dbReference>
<dbReference type="PANTHER" id="PTHR21431">
    <property type="entry name" value="PREFOLDIN SUBUNIT 6"/>
    <property type="match status" value="1"/>
</dbReference>
<dbReference type="PANTHER" id="PTHR21431:SF0">
    <property type="entry name" value="PREFOLDIN SUBUNIT 6"/>
    <property type="match status" value="1"/>
</dbReference>
<dbReference type="Pfam" id="PF01920">
    <property type="entry name" value="Prefoldin_2"/>
    <property type="match status" value="1"/>
</dbReference>
<dbReference type="SUPFAM" id="SSF46579">
    <property type="entry name" value="Prefoldin"/>
    <property type="match status" value="1"/>
</dbReference>
<organism>
    <name type="scientific">Caenorhabditis briggsae</name>
    <dbReference type="NCBI Taxonomy" id="6238"/>
    <lineage>
        <taxon>Eukaryota</taxon>
        <taxon>Metazoa</taxon>
        <taxon>Ecdysozoa</taxon>
        <taxon>Nematoda</taxon>
        <taxon>Chromadorea</taxon>
        <taxon>Rhabditida</taxon>
        <taxon>Rhabditina</taxon>
        <taxon>Rhabditomorpha</taxon>
        <taxon>Rhabditoidea</taxon>
        <taxon>Rhabditidae</taxon>
        <taxon>Peloderinae</taxon>
        <taxon>Caenorhabditis</taxon>
    </lineage>
</organism>
<comment type="function">
    <text evidence="1 2">Binds specifically to cytosolic chaperonin (c-CPN) and transfers target proteins to it. Binds to nascent polypeptide chain and promotes folding in an environment in which there are many competing pathways for nonnative proteins. Required for positioning of the mitotic spindle (By similarity).</text>
</comment>
<comment type="subunit">
    <text evidence="1">Heterohexamer of two PFD-alpha type and four PFD-beta type subunits.</text>
</comment>
<comment type="subcellular location">
    <subcellularLocation>
        <location evidence="2">Cytoplasm</location>
    </subcellularLocation>
</comment>
<comment type="similarity">
    <text evidence="3">Belongs to the prefoldin subunit beta family.</text>
</comment>
<reference evidence="4" key="1">
    <citation type="journal article" date="2003" name="PLoS Biol.">
        <title>The genome sequence of Caenorhabditis briggsae: a platform for comparative genomics.</title>
        <authorList>
            <person name="Stein L.D."/>
            <person name="Bao Z."/>
            <person name="Blasiar D."/>
            <person name="Blumenthal T."/>
            <person name="Brent M.R."/>
            <person name="Chen N."/>
            <person name="Chinwalla A."/>
            <person name="Clarke L."/>
            <person name="Clee C."/>
            <person name="Coghlan A."/>
            <person name="Coulson A."/>
            <person name="D'Eustachio P."/>
            <person name="Fitch D.H.A."/>
            <person name="Fulton L.A."/>
            <person name="Fulton R.E."/>
            <person name="Griffiths-Jones S."/>
            <person name="Harris T.W."/>
            <person name="Hillier L.W."/>
            <person name="Kamath R."/>
            <person name="Kuwabara P.E."/>
            <person name="Mardis E.R."/>
            <person name="Marra M.A."/>
            <person name="Miner T.L."/>
            <person name="Minx P."/>
            <person name="Mullikin J.C."/>
            <person name="Plumb R.W."/>
            <person name="Rogers J."/>
            <person name="Schein J.E."/>
            <person name="Sohrmann M."/>
            <person name="Spieth J."/>
            <person name="Stajich J.E."/>
            <person name="Wei C."/>
            <person name="Willey D."/>
            <person name="Wilson R.K."/>
            <person name="Durbin R.M."/>
            <person name="Waterston R.H."/>
        </authorList>
    </citation>
    <scope>NUCLEOTIDE SEQUENCE [LARGE SCALE GENOMIC DNA]</scope>
    <source>
        <strain evidence="4">AF16</strain>
    </source>
</reference>